<protein>
    <recommendedName>
        <fullName evidence="1">Cystic fibrosis transmembrane conductance regulator</fullName>
        <shortName>CFTR</shortName>
    </recommendedName>
    <alternativeName>
        <fullName>ATP-binding cassette sub-family C member 7</fullName>
    </alternativeName>
    <alternativeName>
        <fullName>Channel conductance-controlling ATPase</fullName>
        <ecNumber evidence="1">5.6.1.6</ecNumber>
    </alternativeName>
    <alternativeName>
        <fullName>cAMP-dependent chloride channel</fullName>
    </alternativeName>
</protein>
<feature type="chain" id="PRO_0000093416" description="Cystic fibrosis transmembrane conductance regulator">
    <location>
        <begin position="1"/>
        <end position="1481"/>
    </location>
</feature>
<feature type="topological domain" description="Cytoplasmic" evidence="1">
    <location>
        <begin position="1"/>
        <end position="77"/>
    </location>
</feature>
<feature type="transmembrane region" description="Helical; Name=1" evidence="1">
    <location>
        <begin position="78"/>
        <end position="98"/>
    </location>
</feature>
<feature type="topological domain" description="Extracellular" evidence="1">
    <location>
        <begin position="99"/>
        <end position="122"/>
    </location>
</feature>
<feature type="transmembrane region" description="Helical; Name=2" evidence="1">
    <location>
        <begin position="123"/>
        <end position="146"/>
    </location>
</feature>
<feature type="topological domain" description="Cytoplasmic" evidence="1">
    <location>
        <begin position="147"/>
        <end position="195"/>
    </location>
</feature>
<feature type="transmembrane region" description="Helical; Name=3" evidence="1">
    <location>
        <begin position="196"/>
        <end position="216"/>
    </location>
</feature>
<feature type="topological domain" description="Extracellular" evidence="1">
    <location>
        <begin position="217"/>
        <end position="222"/>
    </location>
</feature>
<feature type="transmembrane region" description="Helical; Name=4" evidence="1">
    <location>
        <begin position="223"/>
        <end position="243"/>
    </location>
</feature>
<feature type="topological domain" description="Cytoplasmic" evidence="1">
    <location>
        <begin position="244"/>
        <end position="298"/>
    </location>
</feature>
<feature type="transmembrane region" description="Helical; Name=5" evidence="1">
    <location>
        <begin position="299"/>
        <end position="319"/>
    </location>
</feature>
<feature type="topological domain" description="Extracellular" evidence="1">
    <location>
        <begin position="320"/>
        <end position="339"/>
    </location>
</feature>
<feature type="transmembrane region" description="Helical; Name=6" evidence="1">
    <location>
        <begin position="340"/>
        <end position="358"/>
    </location>
</feature>
<feature type="topological domain" description="Cytoplasmic" evidence="1">
    <location>
        <begin position="359"/>
        <end position="858"/>
    </location>
</feature>
<feature type="transmembrane region" description="Helical; Name=7" evidence="1">
    <location>
        <begin position="859"/>
        <end position="879"/>
    </location>
</feature>
<feature type="topological domain" description="Extracellular" evidence="1">
    <location>
        <begin position="880"/>
        <end position="918"/>
    </location>
</feature>
<feature type="transmembrane region" description="Discontinuously helical; Name=8" evidence="1">
    <location>
        <begin position="919"/>
        <end position="939"/>
    </location>
</feature>
<feature type="topological domain" description="Cytoplasmic" evidence="1">
    <location>
        <begin position="940"/>
        <end position="990"/>
    </location>
</feature>
<feature type="transmembrane region" description="Helical; Name=9" evidence="1">
    <location>
        <begin position="991"/>
        <end position="1011"/>
    </location>
</feature>
<feature type="topological domain" description="Extracellular" evidence="1">
    <location>
        <begin position="1012"/>
        <end position="1013"/>
    </location>
</feature>
<feature type="transmembrane region" description="Helical; Name=10" evidence="1">
    <location>
        <begin position="1014"/>
        <end position="1034"/>
    </location>
</feature>
<feature type="topological domain" description="Cytoplasmic" evidence="1">
    <location>
        <begin position="1035"/>
        <end position="1095"/>
    </location>
</feature>
<feature type="transmembrane region" description="Helical; Name=11" evidence="1">
    <location>
        <begin position="1096"/>
        <end position="1116"/>
    </location>
</feature>
<feature type="topological domain" description="Extracellular" evidence="1">
    <location>
        <begin position="1117"/>
        <end position="1130"/>
    </location>
</feature>
<feature type="transmembrane region" description="Helical; Name=12" evidence="1">
    <location>
        <begin position="1131"/>
        <end position="1151"/>
    </location>
</feature>
<feature type="topological domain" description="Cytoplasmic" evidence="1">
    <location>
        <begin position="1152"/>
        <end position="1481"/>
    </location>
</feature>
<feature type="domain" description="ABC transmembrane type-1 1" evidence="6">
    <location>
        <begin position="81"/>
        <end position="365"/>
    </location>
</feature>
<feature type="domain" description="ABC transporter 1" evidence="5">
    <location>
        <begin position="423"/>
        <end position="645"/>
    </location>
</feature>
<feature type="domain" description="ABC transmembrane type-1 2" evidence="6">
    <location>
        <begin position="859"/>
        <end position="1155"/>
    </location>
</feature>
<feature type="domain" description="ABC transporter 2" evidence="5">
    <location>
        <begin position="1211"/>
        <end position="1444"/>
    </location>
</feature>
<feature type="region of interest" description="Disordered R region" evidence="1">
    <location>
        <begin position="653"/>
        <end position="831"/>
    </location>
</feature>
<feature type="region of interest" description="Interaction with GORASP2" evidence="1">
    <location>
        <begin position="1387"/>
        <end position="1481"/>
    </location>
</feature>
<feature type="region of interest" description="Disordered" evidence="7">
    <location>
        <begin position="1453"/>
        <end position="1481"/>
    </location>
</feature>
<feature type="short sequence motif" description="PDZ-binding" evidence="1">
    <location>
        <begin position="1479"/>
        <end position="1481"/>
    </location>
</feature>
<feature type="compositionally biased region" description="Acidic residues" evidence="7">
    <location>
        <begin position="1471"/>
        <end position="1481"/>
    </location>
</feature>
<feature type="binding site" evidence="1">
    <location>
        <position position="401"/>
    </location>
    <ligand>
        <name>ATP</name>
        <dbReference type="ChEBI" id="CHEBI:30616"/>
        <label>1</label>
    </ligand>
</feature>
<feature type="binding site" evidence="5">
    <location>
        <begin position="457"/>
        <end position="464"/>
    </location>
    <ligand>
        <name>ATP</name>
        <dbReference type="ChEBI" id="CHEBI:30616"/>
        <label>1</label>
    </ligand>
</feature>
<feature type="binding site" evidence="2">
    <location>
        <position position="492"/>
    </location>
    <ligand>
        <name>ATP</name>
        <dbReference type="ChEBI" id="CHEBI:30616"/>
        <label>1</label>
    </ligand>
</feature>
<feature type="binding site" evidence="1">
    <location>
        <position position="1220"/>
    </location>
    <ligand>
        <name>ATP</name>
        <dbReference type="ChEBI" id="CHEBI:30616"/>
        <label>2</label>
    </ligand>
</feature>
<feature type="binding site" evidence="5">
    <location>
        <begin position="1245"/>
        <end position="1252"/>
    </location>
    <ligand>
        <name>ATP</name>
        <dbReference type="ChEBI" id="CHEBI:30616"/>
        <label>2</label>
    </ligand>
</feature>
<feature type="modified residue" description="Phosphoserine" evidence="1">
    <location>
        <position position="548"/>
    </location>
</feature>
<feature type="modified residue" description="Phosphoserine; by PKA" evidence="1">
    <location>
        <position position="659"/>
    </location>
</feature>
<feature type="modified residue" description="Phosphoserine; by PKA" evidence="1">
    <location>
        <position position="669"/>
    </location>
</feature>
<feature type="modified residue" description="Phosphoserine; by PKC" evidence="1">
    <location>
        <position position="685"/>
    </location>
</feature>
<feature type="modified residue" description="Phosphoserine; by PKA" evidence="1">
    <location>
        <position position="699"/>
    </location>
</feature>
<feature type="modified residue" description="Phosphoserine" evidence="1">
    <location>
        <position position="711"/>
    </location>
</feature>
<feature type="modified residue" description="Phosphothreonine" evidence="1">
    <location>
        <position position="716"/>
    </location>
</feature>
<feature type="modified residue" description="Phosphoserine; by PKA" evidence="1">
    <location>
        <position position="736"/>
    </location>
</feature>
<feature type="modified residue" description="Phosphoserine; by PKA" evidence="1">
    <location>
        <position position="767"/>
    </location>
</feature>
<feature type="modified residue" description="Phosphoserine; by PKC" evidence="1">
    <location>
        <position position="790"/>
    </location>
</feature>
<feature type="modified residue" description="Phosphoserine; by PKA" evidence="1">
    <location>
        <position position="795"/>
    </location>
</feature>
<feature type="modified residue" description="Phosphoserine; by PKA" evidence="1">
    <location>
        <position position="813"/>
    </location>
</feature>
<feature type="modified residue" description="Phosphoserine" evidence="1">
    <location>
        <position position="1457"/>
    </location>
</feature>
<feature type="lipid moiety-binding region" description="S-palmitoyl cysteine" evidence="1">
    <location>
        <position position="523"/>
    </location>
</feature>
<feature type="lipid moiety-binding region" description="S-palmitoyl cysteine" evidence="1">
    <location>
        <position position="1396"/>
    </location>
</feature>
<feature type="glycosylation site" description="N-linked (GlcNAc...) asparagine" evidence="4">
    <location>
        <position position="894"/>
    </location>
</feature>
<feature type="glycosylation site" description="N-linked (GlcNAc...) asparagine" evidence="4">
    <location>
        <position position="900"/>
    </location>
</feature>
<feature type="cross-link" description="Glycyl lysine isopeptide (Lys-Gly) (interchain with G-Cter in ubiquitin)" evidence="1">
    <location>
        <position position="687"/>
    </location>
</feature>
<feature type="sequence conflict" description="In Ref. 1; AAA30772." evidence="8" ref="1">
    <original>L</original>
    <variation>V</variation>
    <location>
        <position position="15"/>
    </location>
</feature>
<feature type="sequence conflict" description="In Ref. 1; AAA30772." evidence="8" ref="1">
    <original>Q</original>
    <variation>R</variation>
    <location>
        <position position="179"/>
    </location>
</feature>
<feature type="sequence conflict" description="In Ref. 1; AAA30772." evidence="8" ref="1">
    <original>L</original>
    <variation>V</variation>
    <location>
        <position position="259"/>
    </location>
</feature>
<feature type="sequence conflict" description="In Ref. 1; AAA30772." evidence="8" ref="1">
    <original>E</original>
    <variation>D</variation>
    <location>
        <position position="395"/>
    </location>
</feature>
<feature type="sequence conflict" description="In Ref. 1; AAA30772." evidence="8" ref="1">
    <original>S</original>
    <variation>N</variation>
    <location>
        <position position="418"/>
    </location>
</feature>
<feature type="sequence conflict" description="In Ref. 1; AAA30772." evidence="8" ref="1">
    <original>M</original>
    <variation>L</variation>
    <location>
        <position position="468"/>
    </location>
</feature>
<feature type="sequence conflict" description="In Ref. 1; AAA30772." evidence="8" ref="1">
    <original>P</original>
    <variation>A</variation>
    <location>
        <position position="476"/>
    </location>
</feature>
<feature type="sequence conflict" description="In Ref. 1; AAA30772." evidence="8" ref="1">
    <original>FG</original>
    <variation>LD</variation>
    <location>
        <begin position="1068"/>
        <end position="1069"/>
    </location>
</feature>
<feature type="sequence conflict" description="In Ref. 1; AAA30772." evidence="8" ref="1">
    <original>P</original>
    <variation>S</variation>
    <location>
        <position position="1237"/>
    </location>
</feature>
<feature type="sequence conflict" description="In Ref. 1; AAA30772." evidence="8" ref="1">
    <original>S</original>
    <variation>A</variation>
    <location>
        <position position="1327"/>
    </location>
</feature>
<feature type="sequence conflict" description="In Ref. 1; AAA30772." evidence="8" ref="1">
    <original>L</original>
    <variation>F</variation>
    <location>
        <position position="1415"/>
    </location>
</feature>
<evidence type="ECO:0000250" key="1">
    <source>
        <dbReference type="UniProtKB" id="P13569"/>
    </source>
</evidence>
<evidence type="ECO:0000250" key="2">
    <source>
        <dbReference type="UniProtKB" id="P26361"/>
    </source>
</evidence>
<evidence type="ECO:0000250" key="3">
    <source>
        <dbReference type="UniProtKB" id="P34158"/>
    </source>
</evidence>
<evidence type="ECO:0000255" key="4"/>
<evidence type="ECO:0000255" key="5">
    <source>
        <dbReference type="PROSITE-ProRule" id="PRU00434"/>
    </source>
</evidence>
<evidence type="ECO:0000255" key="6">
    <source>
        <dbReference type="PROSITE-ProRule" id="PRU00441"/>
    </source>
</evidence>
<evidence type="ECO:0000256" key="7">
    <source>
        <dbReference type="SAM" id="MobiDB-lite"/>
    </source>
</evidence>
<evidence type="ECO:0000305" key="8"/>
<reference key="1">
    <citation type="journal article" date="1991" name="J. Biol. Chem.">
        <title>A cross-species analysis of the cystic fibrosis transmembrane conductance regulator. Potential functional domains and regulatory sites.</title>
        <authorList>
            <person name="Diamond G."/>
            <person name="Scanlin T.F."/>
            <person name="Zasloff M.A."/>
            <person name="Bevins C.L."/>
        </authorList>
    </citation>
    <scope>NUCLEOTIDE SEQUENCE [MRNA]</scope>
</reference>
<reference key="2">
    <citation type="journal article" date="2003" name="Nature">
        <title>Comparative analyses of multi-species sequences from targeted genomic regions.</title>
        <authorList>
            <person name="Thomas J.W."/>
            <person name="Touchman J.W."/>
            <person name="Blakesley R.W."/>
            <person name="Bouffard G.G."/>
            <person name="Beckstrom-Sternberg S.M."/>
            <person name="Margulies E.H."/>
            <person name="Blanchette M."/>
            <person name="Siepel A.C."/>
            <person name="Thomas P.J."/>
            <person name="McDowell J.C."/>
            <person name="Maskeri B."/>
            <person name="Hansen N.F."/>
            <person name="Schwartz M.S."/>
            <person name="Weber R.J."/>
            <person name="Kent W.J."/>
            <person name="Karolchik D."/>
            <person name="Bruen T.C."/>
            <person name="Bevan R."/>
            <person name="Cutler D.J."/>
            <person name="Schwartz S."/>
            <person name="Elnitski L."/>
            <person name="Idol J.R."/>
            <person name="Prasad A.B."/>
            <person name="Lee-Lin S.-Q."/>
            <person name="Maduro V.V.B."/>
            <person name="Summers T.J."/>
            <person name="Portnoy M.E."/>
            <person name="Dietrich N.L."/>
            <person name="Akhter N."/>
            <person name="Ayele K."/>
            <person name="Benjamin B."/>
            <person name="Cariaga K."/>
            <person name="Brinkley C.P."/>
            <person name="Brooks S.Y."/>
            <person name="Granite S."/>
            <person name="Guan X."/>
            <person name="Gupta J."/>
            <person name="Haghighi P."/>
            <person name="Ho S.-L."/>
            <person name="Huang M.C."/>
            <person name="Karlins E."/>
            <person name="Laric P.L."/>
            <person name="Legaspi R."/>
            <person name="Lim M.J."/>
            <person name="Maduro Q.L."/>
            <person name="Masiello C.A."/>
            <person name="Mastrian S.D."/>
            <person name="McCloskey J.C."/>
            <person name="Pearson R."/>
            <person name="Stantripop S."/>
            <person name="Tiongson E.E."/>
            <person name="Tran J.T."/>
            <person name="Tsurgeon C."/>
            <person name="Vogt J.L."/>
            <person name="Walker M.A."/>
            <person name="Wetherby K.D."/>
            <person name="Wiggins L.S."/>
            <person name="Young A.C."/>
            <person name="Zhang L.-H."/>
            <person name="Osoegawa K."/>
            <person name="Zhu B."/>
            <person name="Zhao B."/>
            <person name="Shu C.L."/>
            <person name="De Jong P.J."/>
            <person name="Lawrence C.E."/>
            <person name="Smit A.F."/>
            <person name="Chakravarti A."/>
            <person name="Haussler D."/>
            <person name="Green P."/>
            <person name="Miller W."/>
            <person name="Green E.D."/>
        </authorList>
    </citation>
    <scope>NUCLEOTIDE SEQUENCE [LARGE SCALE GENOMIC DNA]</scope>
</reference>
<gene>
    <name evidence="1" type="primary">CFTR</name>
    <name type="synonym">ABCC7</name>
</gene>
<name>CFTR_BOVIN</name>
<accession>P35071</accession>
<accession>A4D7S2</accession>
<keyword id="KW-0067">ATP-binding</keyword>
<keyword id="KW-1003">Cell membrane</keyword>
<keyword id="KW-0868">Chloride</keyword>
<keyword id="KW-0869">Chloride channel</keyword>
<keyword id="KW-0256">Endoplasmic reticulum</keyword>
<keyword id="KW-0967">Endosome</keyword>
<keyword id="KW-0325">Glycoprotein</keyword>
<keyword id="KW-0407">Ion channel</keyword>
<keyword id="KW-0406">Ion transport</keyword>
<keyword id="KW-0413">Isomerase</keyword>
<keyword id="KW-1017">Isopeptide bond</keyword>
<keyword id="KW-0449">Lipoprotein</keyword>
<keyword id="KW-0472">Membrane</keyword>
<keyword id="KW-0547">Nucleotide-binding</keyword>
<keyword id="KW-0539">Nucleus</keyword>
<keyword id="KW-0564">Palmitate</keyword>
<keyword id="KW-0597">Phosphoprotein</keyword>
<keyword id="KW-1185">Reference proteome</keyword>
<keyword id="KW-0677">Repeat</keyword>
<keyword id="KW-0812">Transmembrane</keyword>
<keyword id="KW-1133">Transmembrane helix</keyword>
<keyword id="KW-0813">Transport</keyword>
<keyword id="KW-0832">Ubl conjugation</keyword>
<proteinExistence type="evidence at transcript level"/>
<sequence length="1481" mass="167758">MQRSPLEKASVVSKLFFSWTRPILKKGYRQRLELSDIYHISSSDSADNLSEKLEREWDRELASKKNPKLINALRRCFFWRFMFYGIILYLGEVTKAVQPLLLGRIIASYDPDNKVERSIAIYLGIGLCLLFIVRTLLLHPAIFGLHHIGMQMRIAMFSLIYKKTLKLSSRVLDKISIGQLVSLLSNNLNKFDEGLALAHFVWIAPLQVTLLMGLLWELLQAFTFCGLAFLIVLALLQAGLGKMMMKYRDQRAGKINERLVITSEMIENIQSVKAYCWEEAMEKIIENLRQTELKLTRKAAYVRYLNSSAFFFSGFFVVFLSVLPYALLKGIILRKIFTTISFCIVLRMAVTRQFPWAVQTWYDSLGAINKIQDFLQKQEYKTLEYNLTTTDVVMENVTAFWEEGFSKLFEKAKENNNSRKISNGDNSLFFSNLLLGTPVLKDISFKIERGQLLAVAGSTGAGKTSLLMMIMGELEPSEGKIKHSGRISFCSQYSWIMPGTIKDNIIFGVSYDEYRYRSVIKACQLEEDISKFAEKDNVVLGEGGITLSGGQRARISLARAVYKDADLYLLDSPFGYLDVLTEKEIFESCICKLMANKTRILVTSKMEHLKKADKILILHEGSIYFYGTFSELQNQRPDFSSKLMGCDTFDQFTAERRNSIITETLRRFSLEGDTSVSWNETKKPSFKQTGEFGEKRKNSILSSINSIRKFSVVQKTSLQMNGIEGAADAPLERRLSLVPHSEPGEGILPRSNAVNSGPTFLGGRRQSVLNLMTGSSVNQGQSIHRKTATSTRKMSLAPQASLAEIDIYSRRLSQDTGLEISEEINEEDLRDCFFDDVENIPAVTTWNTYLRYITVHKSLMFVLIWCLVVFLVEVAASLVVLCLFPKIFFQDKGNSTKSANNSYAVIITSTSSYYIFYIYVGVADTLLALGLFRGLPLVHTLITVSKTLHHKMLQSVLQAPMSTLNTLKTGGILNRFSKDIAVLDDLLPLTIFDFVQLLLIVIGAVVVVSVLQPYIFLATVPVIAAFILLRAYFLHTSQQLKQLESEGRSPIFTHLVTSLKGLWTLRAFGRQPYFETLFHKALNLHTANWFLYLSTLRWFQMRIEMIFVIFFIAVTFISILTTGEGEGRVGIILTLAMNIMGTLQWAVNSSIDVDSLMRSVSRVFKFIDMPTEDGKPNNSFRPSKDSQPSKVMIIENQHVKKDDIWPSGGQMTVKDLTAKYTDGGNAILENISFSISPGQRVGLLGRTGSGKSTLLLAFLRLLNTKGEIQIDGVSWDSITLQQWRKAFGVIPQKVFIFSGTFRKNLDPYGQWSDQEIWKVADEVGLRSVIEQFPGKLDFVLVDGGCVLSHGHKQLMCLARSVLSKAKILLLDEPSAHLDPITYQIIRRTLKQAFANCTVILSEHRIEAMLECQRFLVIEENKVRQYDSIQRMLSEKSLFRQAISPADRLKLLPHRNSSRQRSRSNIAALKEETEEEVQETKL</sequence>
<comment type="function">
    <text evidence="1 2">Epithelial ion channel that plays an important role in the regulation of epithelial ion and water transport and fluid homeostasis. Mediates the transport of chloride ions across the cell membrane (By similarity). Possesses an intrinsic ATPase activity and utilizes ATP to gate its channel; the passive flow of anions through the channel is gated by cycles of ATP binding and hydrolysis by the ATP-binding domains (By similarity). The ion channel is also permeable to HCO(3)(-); selectivity depends on the extracellular chloride concentration. Exerts its function also by modulating the activity of other ion channels and transporters. Contributes to the regulation of the pH and the ion content of the epithelial fluid layer. Modulates the activity of the epithelial sodium channel (ENaC) complex, in part by regulating the cell surface expression of the ENaC complex. May regulate bicarbonate secretion and salvage in epithelial cells by regulating the transporter SLC4A7. Can inhibit the chloride channel activity of ANO1 (By similarity). Plays a role in the chloride and bicarbonate homeostasis during sperm epididymal maturation and capacitation (By similarity).</text>
</comment>
<comment type="catalytic activity">
    <reaction evidence="1">
        <text>ATP + H2O + closed Cl(-) channel = ADP + phosphate + open Cl(-) channel.</text>
        <dbReference type="EC" id="5.6.1.6"/>
    </reaction>
</comment>
<comment type="catalytic activity">
    <reaction evidence="1">
        <text>chloride(in) = chloride(out)</text>
        <dbReference type="Rhea" id="RHEA:29823"/>
        <dbReference type="ChEBI" id="CHEBI:17996"/>
    </reaction>
</comment>
<comment type="catalytic activity">
    <reaction evidence="1">
        <text>hydrogencarbonate(in) = hydrogencarbonate(out)</text>
        <dbReference type="Rhea" id="RHEA:28695"/>
        <dbReference type="ChEBI" id="CHEBI:17544"/>
    </reaction>
</comment>
<comment type="catalytic activity">
    <reaction evidence="1">
        <text>ATP + H2O = ADP + phosphate + H(+)</text>
        <dbReference type="Rhea" id="RHEA:13065"/>
        <dbReference type="ChEBI" id="CHEBI:15377"/>
        <dbReference type="ChEBI" id="CHEBI:15378"/>
        <dbReference type="ChEBI" id="CHEBI:30616"/>
        <dbReference type="ChEBI" id="CHEBI:43474"/>
        <dbReference type="ChEBI" id="CHEBI:456216"/>
    </reaction>
    <physiologicalReaction direction="left-to-right" evidence="1">
        <dbReference type="Rhea" id="RHEA:13066"/>
    </physiologicalReaction>
</comment>
<comment type="subunit">
    <text evidence="1 2 3">Monomer; does not require oligomerization for channel activity. May form oligomers in the membrane (By similarity). Interacts with SLC26A3, SLC26A6 and NHERF1 (By similarity). Interacts with SHANK2 (By similarity). Interacts with MYO6 (By similarity). Interacts (via C-terminus) with GOPC (via PDZ domain); this promotes CFTR internalization and thereby decreases channel activity. Interacts with SLC4A7 through NHERF1. Found in a complex with MYO5B and RAB11A. Interacts with ANO1. Interacts with SLC26A8 (By similarity). Interacts with AHCYL1; the interaction increases CFTR activity (By similarity). Interacts with CSE1L (By similarity). The core-glycosylated form interacts with GORASP2 (via PDZ GRASP-type 1 domain) in respone to ER stress (By similarity). Interacts with MARCHF2; the interaction leads to CFTR ubiqtuitination and degradation (By similarity). Interacts with ADGRG2 (By similarity).</text>
</comment>
<comment type="subcellular location">
    <subcellularLocation>
        <location evidence="2">Apical cell membrane</location>
        <topology evidence="1">Multi-pass membrane protein</topology>
    </subcellularLocation>
    <subcellularLocation>
        <location evidence="1">Early endosome membrane</location>
        <topology evidence="1">Multi-pass membrane protein</topology>
    </subcellularLocation>
    <subcellularLocation>
        <location evidence="2">Cell membrane</location>
        <topology evidence="1">Multi-pass membrane protein</topology>
    </subcellularLocation>
    <subcellularLocation>
        <location evidence="1">Recycling endosome membrane</location>
        <topology evidence="1">Multi-pass membrane protein</topology>
    </subcellularLocation>
    <subcellularLocation>
        <location evidence="1">Endoplasmic reticulum membrane</location>
        <topology evidence="1">Multi-pass membrane protein</topology>
    </subcellularLocation>
    <subcellularLocation>
        <location evidence="3">Nucleus</location>
    </subcellularLocation>
    <text evidence="1 3">The channel is internalized from the cell surface into an endosomal recycling compartment, from where it is recycled to the cell membrane. In the oviduct and bronchus, detected on the apical side of epithelial cells, but not associated with cilia. In Sertoli cells, a processed product is detected in the nucleus. ER stress induces GORASP2-mediated unconventional (ER/Golgi-independent) trafficking of core-glycosylated CFTR to cell membrane.</text>
</comment>
<comment type="domain">
    <text evidence="1 2">Binds and hydrolyzes ATP via the two cytoplasmic ABC transporter nucleotide-binding domains. The two ATP-binding domains interact with each other, forming a head-to-tail dimer. Normal ATPase activity requires interaction between the two domains. The first ABC transporter nucleotide-binding domain has no ATPase activity by itself.</text>
</comment>
<comment type="domain">
    <text evidence="1">The PDZ-binding motif mediates interactions with GOPC and with the SLC4A7, NHERF1/EBP50 complex.</text>
</comment>
<comment type="domain">
    <text evidence="1">The disordered R region mediates channel activation when it is phosphorylated, but not in the absence of phosphorylation.</text>
</comment>
<comment type="PTM">
    <text evidence="1">N-glycosylated.</text>
</comment>
<comment type="PTM">
    <text evidence="1">Phosphorylated; cAMP treatment promotes phosphorylation and activates the channel. Dephosphorylation decreases the ATPase activity (in vitro). Phosphorylation at PKA sites activates the channel. Phosphorylation at PKC sites enhances the response to phosphorylation by PKA. Phosphorylated by AMPK; this inhibits channel activity.</text>
</comment>
<comment type="PTM">
    <text evidence="1">Ubiquitinated, leading to its degradation in the lysosome. Deubiquitination by USP10 in early endosomes enhances its endocytic recycling to the cell membrane. Ubiquitinated by RNF185 during ER stress. Ubiquitinated by MARCHF2 (By similarity).</text>
</comment>
<comment type="similarity">
    <text evidence="8">Belongs to the ABC transporter superfamily. ABCC family. CFTR transporter (TC 3.A.1.202) subfamily.</text>
</comment>
<organism>
    <name type="scientific">Bos taurus</name>
    <name type="common">Bovine</name>
    <dbReference type="NCBI Taxonomy" id="9913"/>
    <lineage>
        <taxon>Eukaryota</taxon>
        <taxon>Metazoa</taxon>
        <taxon>Chordata</taxon>
        <taxon>Craniata</taxon>
        <taxon>Vertebrata</taxon>
        <taxon>Euteleostomi</taxon>
        <taxon>Mammalia</taxon>
        <taxon>Eutheria</taxon>
        <taxon>Laurasiatheria</taxon>
        <taxon>Artiodactyla</taxon>
        <taxon>Ruminantia</taxon>
        <taxon>Pecora</taxon>
        <taxon>Bovidae</taxon>
        <taxon>Bovinae</taxon>
        <taxon>Bos</taxon>
    </lineage>
</organism>
<dbReference type="EC" id="5.6.1.6" evidence="1"/>
<dbReference type="EMBL" id="M76128">
    <property type="protein sequence ID" value="AAA30772.1"/>
    <property type="molecule type" value="mRNA"/>
</dbReference>
<dbReference type="EMBL" id="DP000008">
    <property type="protein sequence ID" value="AAR16263.1"/>
    <property type="molecule type" value="Genomic_DNA"/>
</dbReference>
<dbReference type="PIR" id="A39323">
    <property type="entry name" value="A39323"/>
</dbReference>
<dbReference type="RefSeq" id="NP_776443.1">
    <property type="nucleotide sequence ID" value="NM_174018.2"/>
</dbReference>
<dbReference type="SMR" id="P35071"/>
<dbReference type="FunCoup" id="P35071">
    <property type="interactions" value="171"/>
</dbReference>
<dbReference type="STRING" id="9913.ENSBTAP00000049907"/>
<dbReference type="GlyCosmos" id="P35071">
    <property type="glycosylation" value="2 sites, No reported glycans"/>
</dbReference>
<dbReference type="GlyGen" id="P35071">
    <property type="glycosylation" value="2 sites"/>
</dbReference>
<dbReference type="PaxDb" id="9913-ENSBTAP00000049907"/>
<dbReference type="GeneID" id="281067"/>
<dbReference type="KEGG" id="bta:281067"/>
<dbReference type="CTD" id="1080"/>
<dbReference type="eggNOG" id="KOG0054">
    <property type="taxonomic scope" value="Eukaryota"/>
</dbReference>
<dbReference type="InParanoid" id="P35071"/>
<dbReference type="OrthoDB" id="6500128at2759"/>
<dbReference type="Proteomes" id="UP000009136">
    <property type="component" value="Unplaced"/>
</dbReference>
<dbReference type="GO" id="GO:0016324">
    <property type="term" value="C:apical plasma membrane"/>
    <property type="evidence" value="ECO:0000250"/>
    <property type="project" value="UniProtKB"/>
</dbReference>
<dbReference type="GO" id="GO:0034707">
    <property type="term" value="C:chloride channel complex"/>
    <property type="evidence" value="ECO:0007669"/>
    <property type="project" value="UniProtKB-KW"/>
</dbReference>
<dbReference type="GO" id="GO:0005829">
    <property type="term" value="C:cytosol"/>
    <property type="evidence" value="ECO:0000318"/>
    <property type="project" value="GO_Central"/>
</dbReference>
<dbReference type="GO" id="GO:0005769">
    <property type="term" value="C:early endosome"/>
    <property type="evidence" value="ECO:0000250"/>
    <property type="project" value="UniProtKB"/>
</dbReference>
<dbReference type="GO" id="GO:0031901">
    <property type="term" value="C:early endosome membrane"/>
    <property type="evidence" value="ECO:0007669"/>
    <property type="project" value="UniProtKB-SubCell"/>
</dbReference>
<dbReference type="GO" id="GO:0005789">
    <property type="term" value="C:endoplasmic reticulum membrane"/>
    <property type="evidence" value="ECO:0000250"/>
    <property type="project" value="UniProtKB"/>
</dbReference>
<dbReference type="GO" id="GO:0016020">
    <property type="term" value="C:membrane"/>
    <property type="evidence" value="ECO:0000250"/>
    <property type="project" value="UniProtKB"/>
</dbReference>
<dbReference type="GO" id="GO:0005634">
    <property type="term" value="C:nucleus"/>
    <property type="evidence" value="ECO:0000250"/>
    <property type="project" value="UniProtKB"/>
</dbReference>
<dbReference type="GO" id="GO:0005886">
    <property type="term" value="C:plasma membrane"/>
    <property type="evidence" value="ECO:0000250"/>
    <property type="project" value="UniProtKB"/>
</dbReference>
<dbReference type="GO" id="GO:0055038">
    <property type="term" value="C:recycling endosome membrane"/>
    <property type="evidence" value="ECO:0007669"/>
    <property type="project" value="UniProtKB-SubCell"/>
</dbReference>
<dbReference type="GO" id="GO:0140359">
    <property type="term" value="F:ABC-type transporter activity"/>
    <property type="evidence" value="ECO:0007669"/>
    <property type="project" value="InterPro"/>
</dbReference>
<dbReference type="GO" id="GO:0005524">
    <property type="term" value="F:ATP binding"/>
    <property type="evidence" value="ECO:0007669"/>
    <property type="project" value="UniProtKB-KW"/>
</dbReference>
<dbReference type="GO" id="GO:0016887">
    <property type="term" value="F:ATP hydrolysis activity"/>
    <property type="evidence" value="ECO:0000250"/>
    <property type="project" value="UniProtKB"/>
</dbReference>
<dbReference type="GO" id="GO:0042626">
    <property type="term" value="F:ATPase-coupled transmembrane transporter activity"/>
    <property type="evidence" value="ECO:0000318"/>
    <property type="project" value="GO_Central"/>
</dbReference>
<dbReference type="GO" id="GO:0015106">
    <property type="term" value="F:bicarbonate transmembrane transporter activity"/>
    <property type="evidence" value="ECO:0000250"/>
    <property type="project" value="UniProtKB"/>
</dbReference>
<dbReference type="GO" id="GO:0005254">
    <property type="term" value="F:chloride channel activity"/>
    <property type="evidence" value="ECO:0000250"/>
    <property type="project" value="UniProtKB"/>
</dbReference>
<dbReference type="GO" id="GO:0019869">
    <property type="term" value="F:chloride channel inhibitor activity"/>
    <property type="evidence" value="ECO:0000250"/>
    <property type="project" value="UniProtKB"/>
</dbReference>
<dbReference type="GO" id="GO:0015108">
    <property type="term" value="F:chloride transmembrane transporter activity"/>
    <property type="evidence" value="ECO:0000250"/>
    <property type="project" value="UniProtKB"/>
</dbReference>
<dbReference type="GO" id="GO:0005260">
    <property type="term" value="F:intracellularly ATP-gated chloride channel activity"/>
    <property type="evidence" value="ECO:0000250"/>
    <property type="project" value="UniProtKB"/>
</dbReference>
<dbReference type="GO" id="GO:0015701">
    <property type="term" value="P:bicarbonate transport"/>
    <property type="evidence" value="ECO:0000250"/>
    <property type="project" value="UniProtKB"/>
</dbReference>
<dbReference type="GO" id="GO:0071320">
    <property type="term" value="P:cellular response to cAMP"/>
    <property type="evidence" value="ECO:0000250"/>
    <property type="project" value="UniProtKB"/>
</dbReference>
<dbReference type="GO" id="GO:1904322">
    <property type="term" value="P:cellular response to forskolin"/>
    <property type="evidence" value="ECO:0000250"/>
    <property type="project" value="UniProtKB"/>
</dbReference>
<dbReference type="GO" id="GO:1902476">
    <property type="term" value="P:chloride transmembrane transport"/>
    <property type="evidence" value="ECO:0000250"/>
    <property type="project" value="UniProtKB"/>
</dbReference>
<dbReference type="GO" id="GO:0051454">
    <property type="term" value="P:intracellular pH elevation"/>
    <property type="evidence" value="ECO:0000250"/>
    <property type="project" value="UniProtKB"/>
</dbReference>
<dbReference type="GO" id="GO:0060081">
    <property type="term" value="P:membrane hyperpolarization"/>
    <property type="evidence" value="ECO:0000250"/>
    <property type="project" value="UniProtKB"/>
</dbReference>
<dbReference type="GO" id="GO:0050891">
    <property type="term" value="P:multicellular organismal-level water homeostasis"/>
    <property type="evidence" value="ECO:0000250"/>
    <property type="project" value="UniProtKB"/>
</dbReference>
<dbReference type="GO" id="GO:0034976">
    <property type="term" value="P:response to endoplasmic reticulum stress"/>
    <property type="evidence" value="ECO:0000250"/>
    <property type="project" value="UniProtKB"/>
</dbReference>
<dbReference type="GO" id="GO:0048240">
    <property type="term" value="P:sperm capacitation"/>
    <property type="evidence" value="ECO:0000250"/>
    <property type="project" value="UniProtKB"/>
</dbReference>
<dbReference type="GO" id="GO:0035377">
    <property type="term" value="P:transepithelial water transport"/>
    <property type="evidence" value="ECO:0000250"/>
    <property type="project" value="UniProtKB"/>
</dbReference>
<dbReference type="CDD" id="cd18594">
    <property type="entry name" value="ABC_6TM_CFTR_D1"/>
    <property type="match status" value="1"/>
</dbReference>
<dbReference type="CDD" id="cd18600">
    <property type="entry name" value="ABC_6TM_CFTR_D2"/>
    <property type="match status" value="1"/>
</dbReference>
<dbReference type="CDD" id="cd03291">
    <property type="entry name" value="ABCC_CFTR1"/>
    <property type="match status" value="1"/>
</dbReference>
<dbReference type="FunFam" id="1.20.1560.10:FF:000017">
    <property type="entry name" value="Cystic fibrosis transmembrane conductance regulator"/>
    <property type="match status" value="1"/>
</dbReference>
<dbReference type="FunFam" id="1.20.1560.10:FF:000019">
    <property type="entry name" value="Cystic fibrosis transmembrane conductance regulator"/>
    <property type="match status" value="1"/>
</dbReference>
<dbReference type="FunFam" id="3.40.50.300:FF:000581">
    <property type="entry name" value="Cystic fibrosis transmembrane conductance regulator"/>
    <property type="match status" value="1"/>
</dbReference>
<dbReference type="FunFam" id="3.40.50.300:FF:000591">
    <property type="entry name" value="Cystic fibrosis transmembrane conductance regulator"/>
    <property type="match status" value="1"/>
</dbReference>
<dbReference type="Gene3D" id="1.20.1560.10">
    <property type="entry name" value="ABC transporter type 1, transmembrane domain"/>
    <property type="match status" value="2"/>
</dbReference>
<dbReference type="Gene3D" id="3.40.50.300">
    <property type="entry name" value="P-loop containing nucleotide triphosphate hydrolases"/>
    <property type="match status" value="2"/>
</dbReference>
<dbReference type="InterPro" id="IPR003593">
    <property type="entry name" value="AAA+_ATPase"/>
</dbReference>
<dbReference type="InterPro" id="IPR011527">
    <property type="entry name" value="ABC1_TM_dom"/>
</dbReference>
<dbReference type="InterPro" id="IPR036640">
    <property type="entry name" value="ABC1_TM_sf"/>
</dbReference>
<dbReference type="InterPro" id="IPR003439">
    <property type="entry name" value="ABC_transporter-like_ATP-bd"/>
</dbReference>
<dbReference type="InterPro" id="IPR017871">
    <property type="entry name" value="ABC_transporter-like_CS"/>
</dbReference>
<dbReference type="InterPro" id="IPR050173">
    <property type="entry name" value="ABC_transporter_C-like"/>
</dbReference>
<dbReference type="InterPro" id="IPR009147">
    <property type="entry name" value="CFTR/ABCC7"/>
</dbReference>
<dbReference type="InterPro" id="IPR047082">
    <property type="entry name" value="CFTR1_ATP-bd_dom1"/>
</dbReference>
<dbReference type="InterPro" id="IPR025837">
    <property type="entry name" value="CFTR_reg_dom"/>
</dbReference>
<dbReference type="InterPro" id="IPR027417">
    <property type="entry name" value="P-loop_NTPase"/>
</dbReference>
<dbReference type="NCBIfam" id="TIGR01271">
    <property type="entry name" value="CFTR_protein"/>
    <property type="match status" value="1"/>
</dbReference>
<dbReference type="PANTHER" id="PTHR24223">
    <property type="entry name" value="ATP-BINDING CASSETTE SUB-FAMILY C"/>
    <property type="match status" value="1"/>
</dbReference>
<dbReference type="PANTHER" id="PTHR24223:SF19">
    <property type="entry name" value="CYSTIC FIBROSIS TRANSMEMBRANE CONDUCTANCE REGULATOR"/>
    <property type="match status" value="1"/>
</dbReference>
<dbReference type="Pfam" id="PF00664">
    <property type="entry name" value="ABC_membrane"/>
    <property type="match status" value="2"/>
</dbReference>
<dbReference type="Pfam" id="PF00005">
    <property type="entry name" value="ABC_tran"/>
    <property type="match status" value="2"/>
</dbReference>
<dbReference type="Pfam" id="PF14396">
    <property type="entry name" value="CFTR_R"/>
    <property type="match status" value="1"/>
</dbReference>
<dbReference type="PRINTS" id="PR01851">
    <property type="entry name" value="CYSFIBREGLTR"/>
</dbReference>
<dbReference type="SMART" id="SM00382">
    <property type="entry name" value="AAA"/>
    <property type="match status" value="2"/>
</dbReference>
<dbReference type="SUPFAM" id="SSF90123">
    <property type="entry name" value="ABC transporter transmembrane region"/>
    <property type="match status" value="2"/>
</dbReference>
<dbReference type="SUPFAM" id="SSF52540">
    <property type="entry name" value="P-loop containing nucleoside triphosphate hydrolases"/>
    <property type="match status" value="2"/>
</dbReference>
<dbReference type="PROSITE" id="PS50929">
    <property type="entry name" value="ABC_TM1F"/>
    <property type="match status" value="2"/>
</dbReference>
<dbReference type="PROSITE" id="PS00211">
    <property type="entry name" value="ABC_TRANSPORTER_1"/>
    <property type="match status" value="1"/>
</dbReference>
<dbReference type="PROSITE" id="PS50893">
    <property type="entry name" value="ABC_TRANSPORTER_2"/>
    <property type="match status" value="2"/>
</dbReference>